<evidence type="ECO:0000255" key="1"/>
<evidence type="ECO:0000255" key="2">
    <source>
        <dbReference type="PROSITE-ProRule" id="PRU00498"/>
    </source>
</evidence>
<evidence type="ECO:0000256" key="3">
    <source>
        <dbReference type="SAM" id="MobiDB-lite"/>
    </source>
</evidence>
<evidence type="ECO:0000269" key="4">
    <source>
    </source>
</evidence>
<evidence type="ECO:0000303" key="5">
    <source>
    </source>
</evidence>
<evidence type="ECO:0000305" key="6"/>
<evidence type="ECO:0000305" key="7">
    <source>
    </source>
</evidence>
<accession>A0A6J4B6H5</accession>
<protein>
    <recommendedName>
        <fullName evidence="5">MFS-type efflux pump LUC4</fullName>
    </recommendedName>
    <alternativeName>
        <fullName evidence="5">Lucilactaene biosynthesis cluster protein 4</fullName>
    </alternativeName>
</protein>
<dbReference type="EMBL" id="LC515193">
    <property type="protein sequence ID" value="BBQ09589.1"/>
    <property type="molecule type" value="Genomic_DNA"/>
</dbReference>
<dbReference type="SMR" id="A0A6J4B6H5"/>
<dbReference type="GlyCosmos" id="A0A6J4B6H5">
    <property type="glycosylation" value="3 sites, No reported glycans"/>
</dbReference>
<dbReference type="GO" id="GO:0005886">
    <property type="term" value="C:plasma membrane"/>
    <property type="evidence" value="ECO:0007669"/>
    <property type="project" value="TreeGrafter"/>
</dbReference>
<dbReference type="GO" id="GO:0022857">
    <property type="term" value="F:transmembrane transporter activity"/>
    <property type="evidence" value="ECO:0007669"/>
    <property type="project" value="InterPro"/>
</dbReference>
<dbReference type="CDD" id="cd17502">
    <property type="entry name" value="MFS_Azr1_MDR_like"/>
    <property type="match status" value="1"/>
</dbReference>
<dbReference type="FunFam" id="1.20.1250.20:FF:000484">
    <property type="entry name" value="MFS general substrate transporter"/>
    <property type="match status" value="1"/>
</dbReference>
<dbReference type="Gene3D" id="1.20.1250.20">
    <property type="entry name" value="MFS general substrate transporter like domains"/>
    <property type="match status" value="1"/>
</dbReference>
<dbReference type="Gene3D" id="1.20.1720.10">
    <property type="entry name" value="Multidrug resistance protein D"/>
    <property type="match status" value="1"/>
</dbReference>
<dbReference type="InterPro" id="IPR011701">
    <property type="entry name" value="MFS"/>
</dbReference>
<dbReference type="InterPro" id="IPR020846">
    <property type="entry name" value="MFS_dom"/>
</dbReference>
<dbReference type="InterPro" id="IPR036259">
    <property type="entry name" value="MFS_trans_sf"/>
</dbReference>
<dbReference type="PANTHER" id="PTHR23501">
    <property type="entry name" value="MAJOR FACILITATOR SUPERFAMILY"/>
    <property type="match status" value="1"/>
</dbReference>
<dbReference type="PANTHER" id="PTHR23501:SF187">
    <property type="entry name" value="MAJOR FACILITATOR SUPERFAMILY (MFS) PROFILE DOMAIN-CONTAINING PROTEIN"/>
    <property type="match status" value="1"/>
</dbReference>
<dbReference type="Pfam" id="PF07690">
    <property type="entry name" value="MFS_1"/>
    <property type="match status" value="1"/>
</dbReference>
<dbReference type="PRINTS" id="PR01036">
    <property type="entry name" value="TCRTETB"/>
</dbReference>
<dbReference type="SUPFAM" id="SSF103473">
    <property type="entry name" value="MFS general substrate transporter"/>
    <property type="match status" value="1"/>
</dbReference>
<dbReference type="PROSITE" id="PS50850">
    <property type="entry name" value="MFS"/>
    <property type="match status" value="1"/>
</dbReference>
<keyword id="KW-0325">Glycoprotein</keyword>
<keyword id="KW-0472">Membrane</keyword>
<keyword id="KW-0812">Transmembrane</keyword>
<keyword id="KW-1133">Transmembrane helix</keyword>
<keyword id="KW-0813">Transport</keyword>
<proteinExistence type="inferred from homology"/>
<reference key="1">
    <citation type="journal article" date="2020" name="Biosci. Biotechnol. Biochem.">
        <title>Biosynthetic gene cluster identification and biological activity of lucilactaene from Fusarium sp. RK97-94.</title>
        <authorList>
            <person name="Kato S."/>
            <person name="Motoyama T."/>
            <person name="Futamura Y."/>
            <person name="Uramoto M."/>
            <person name="Nogawa T."/>
            <person name="Hayashi T."/>
            <person name="Hirota H."/>
            <person name="Tanaka A."/>
            <person name="Takahashi-Ando N."/>
            <person name="Kamakura T."/>
            <person name="Osada H."/>
        </authorList>
    </citation>
    <scope>NUCLEOTIDE SEQUENCE [GENOMIC DNA]</scope>
    <scope>FUNCTION</scope>
    <source>
        <strain>RK97-94</strain>
    </source>
</reference>
<reference key="2">
    <citation type="journal article" date="2022" name="J. Antibiot.">
        <title>Isolation of new lucilactaene derivatives from P450 monooxygenase and aldehyde dehydrogenase knockout Fusarium sp. RK97-94 strains and their biological activities.</title>
        <authorList>
            <person name="Abdelhakim I.A."/>
            <person name="Motoyama T."/>
            <person name="Nogawa T."/>
            <person name="Mahmud F.B."/>
            <person name="Futamura Y."/>
            <person name="Takahashi S."/>
            <person name="Osada H."/>
        </authorList>
    </citation>
    <scope>FUNCTION</scope>
</reference>
<gene>
    <name evidence="5" type="primary">LUC4</name>
</gene>
<organism>
    <name type="scientific">Fusarium sp</name>
    <dbReference type="NCBI Taxonomy" id="29916"/>
    <lineage>
        <taxon>Eukaryota</taxon>
        <taxon>Fungi</taxon>
        <taxon>Dikarya</taxon>
        <taxon>Ascomycota</taxon>
        <taxon>Pezizomycotina</taxon>
        <taxon>Sordariomycetes</taxon>
        <taxon>Hypocreomycetidae</taxon>
        <taxon>Hypocreales</taxon>
        <taxon>Nectriaceae</taxon>
        <taxon>Fusarium</taxon>
    </lineage>
</organism>
<sequence>MGQSQDNTQLTTASPQAEKDLSSNDNPPESEPAAPKKGARFWLVFIAIALTTFLAALDTSIISTALPTITSDLGSNSLYVWIVDSYLLASTATIPIFAQAANIYGRRSLTLIAVCLFTLGSGLCGGAHNTAMMIGGRSVQGVGGGGILTMSEIVVCDMVSVRERGMYAGIIGGVWAIASVIAPIMGGAFAQNVSWRWIFYINLPIAGVVLVALIVFLKLARPPTGTFKEQMSRIDWGGSVLLIASVTAVVLALSWGGSEHPWSSWRTLVPLILGLVGQLAFFAYQGAPWLKEPTMPLRLFGNRTSSTLFVISFVHSMLLFWVCYFLPVYFQAVKEASPARSAVMLFPIATTSAPGGVIAGIFITKTGKYRVWHFVGFALMSISCGLFTLLDDKSSIGRWVGFQLLFGFGTGFVFTSCLPPILASLPDSDVATATGAWTFLRNFGSIWGIAIPAAAFNTRVNSSLDKVSSGTVRDMLVNGGAYEHATKTFIQAFNNTPRLKAEIVQVYMDGLKLVWQVSIAFSVLGFVLAFLVKSLTLRDELNTEYGLEEKDTSKEKSSEEGNAS</sequence>
<name>LUC4_FUSSX</name>
<feature type="chain" id="PRO_0000454636" description="MFS-type efflux pump LUC4">
    <location>
        <begin position="1"/>
        <end position="564"/>
    </location>
</feature>
<feature type="transmembrane region" description="Helical" evidence="1">
    <location>
        <begin position="42"/>
        <end position="62"/>
    </location>
</feature>
<feature type="transmembrane region" description="Helical" evidence="1">
    <location>
        <begin position="78"/>
        <end position="98"/>
    </location>
</feature>
<feature type="transmembrane region" description="Helical" evidence="1">
    <location>
        <begin position="108"/>
        <end position="128"/>
    </location>
</feature>
<feature type="transmembrane region" description="Helical" evidence="1">
    <location>
        <begin position="141"/>
        <end position="161"/>
    </location>
</feature>
<feature type="transmembrane region" description="Helical" evidence="1">
    <location>
        <begin position="170"/>
        <end position="190"/>
    </location>
</feature>
<feature type="transmembrane region" description="Helical" evidence="1">
    <location>
        <begin position="197"/>
        <end position="217"/>
    </location>
</feature>
<feature type="transmembrane region" description="Helical" evidence="1">
    <location>
        <begin position="236"/>
        <end position="256"/>
    </location>
</feature>
<feature type="transmembrane region" description="Helical" evidence="1">
    <location>
        <begin position="268"/>
        <end position="288"/>
    </location>
</feature>
<feature type="transmembrane region" description="Helical" evidence="1">
    <location>
        <begin position="308"/>
        <end position="328"/>
    </location>
</feature>
<feature type="transmembrane region" description="Helical" evidence="1">
    <location>
        <begin position="343"/>
        <end position="363"/>
    </location>
</feature>
<feature type="transmembrane region" description="Helical" evidence="1">
    <location>
        <begin position="371"/>
        <end position="391"/>
    </location>
</feature>
<feature type="transmembrane region" description="Helical" evidence="1">
    <location>
        <begin position="404"/>
        <end position="424"/>
    </location>
</feature>
<feature type="transmembrane region" description="Helical" evidence="1">
    <location>
        <begin position="436"/>
        <end position="456"/>
    </location>
</feature>
<feature type="transmembrane region" description="Helical" evidence="1">
    <location>
        <begin position="512"/>
        <end position="532"/>
    </location>
</feature>
<feature type="region of interest" description="Disordered" evidence="3">
    <location>
        <begin position="1"/>
        <end position="35"/>
    </location>
</feature>
<feature type="compositionally biased region" description="Polar residues" evidence="3">
    <location>
        <begin position="1"/>
        <end position="15"/>
    </location>
</feature>
<feature type="glycosylation site" description="N-linked (GlcNAc...) asparagine" evidence="2">
    <location>
        <position position="192"/>
    </location>
</feature>
<feature type="glycosylation site" description="N-linked (GlcNAc...) asparagine" evidence="2">
    <location>
        <position position="302"/>
    </location>
</feature>
<feature type="glycosylation site" description="N-linked (GlcNAc...) asparagine" evidence="2">
    <location>
        <position position="461"/>
    </location>
</feature>
<comment type="function">
    <text evidence="4 7">MFS-type efflux pump; part of the gene cluster that mediates the biosynthesis of the mycotoxin lucilactaene and the lucilactaene-related compound NG-391 that act as cell cycle inhibitors with potent growth inhibitory activity against malarial parasites, moderate growth inhibitory activity against cancer cells, and no activity against bacteria and fungi.</text>
</comment>
<comment type="subcellular location">
    <subcellularLocation>
        <location evidence="1">Membrane</location>
        <topology evidence="1">Multi-pass membrane protein</topology>
    </subcellularLocation>
</comment>
<comment type="similarity">
    <text evidence="6">Belongs to the major facilitator superfamily. TCR/Tet family.</text>
</comment>